<comment type="function">
    <text evidence="1">This enzyme is involved in nucleotide metabolism: it produces dUMP, the immediate precursor of thymidine nucleotides and it decreases the intracellular concentration of dUTP so that uracil cannot be incorporated into DNA.</text>
</comment>
<comment type="catalytic activity">
    <reaction evidence="1">
        <text>dUTP + H2O = dUMP + diphosphate + H(+)</text>
        <dbReference type="Rhea" id="RHEA:10248"/>
        <dbReference type="ChEBI" id="CHEBI:15377"/>
        <dbReference type="ChEBI" id="CHEBI:15378"/>
        <dbReference type="ChEBI" id="CHEBI:33019"/>
        <dbReference type="ChEBI" id="CHEBI:61555"/>
        <dbReference type="ChEBI" id="CHEBI:246422"/>
        <dbReference type="EC" id="3.6.1.23"/>
    </reaction>
</comment>
<comment type="cofactor">
    <cofactor evidence="1">
        <name>Mg(2+)</name>
        <dbReference type="ChEBI" id="CHEBI:18420"/>
    </cofactor>
</comment>
<comment type="pathway">
    <text evidence="1">Pyrimidine metabolism; dUMP biosynthesis; dUMP from dCTP (dUTP route): step 2/2.</text>
</comment>
<comment type="similarity">
    <text evidence="1">Belongs to the dUTPase family.</text>
</comment>
<proteinExistence type="inferred from homology"/>
<gene>
    <name evidence="1" type="primary">dut</name>
    <name type="ordered locus">BR1675</name>
    <name type="ordered locus">BS1330_I1669</name>
</gene>
<reference key="1">
    <citation type="journal article" date="2002" name="Proc. Natl. Acad. Sci. U.S.A.">
        <title>The Brucella suis genome reveals fundamental similarities between animal and plant pathogens and symbionts.</title>
        <authorList>
            <person name="Paulsen I.T."/>
            <person name="Seshadri R."/>
            <person name="Nelson K.E."/>
            <person name="Eisen J.A."/>
            <person name="Heidelberg J.F."/>
            <person name="Read T.D."/>
            <person name="Dodson R.J."/>
            <person name="Umayam L.A."/>
            <person name="Brinkac L.M."/>
            <person name="Beanan M.J."/>
            <person name="Daugherty S.C."/>
            <person name="DeBoy R.T."/>
            <person name="Durkin A.S."/>
            <person name="Kolonay J.F."/>
            <person name="Madupu R."/>
            <person name="Nelson W.C."/>
            <person name="Ayodeji B."/>
            <person name="Kraul M."/>
            <person name="Shetty J."/>
            <person name="Malek J.A."/>
            <person name="Van Aken S.E."/>
            <person name="Riedmuller S."/>
            <person name="Tettelin H."/>
            <person name="Gill S.R."/>
            <person name="White O."/>
            <person name="Salzberg S.L."/>
            <person name="Hoover D.L."/>
            <person name="Lindler L.E."/>
            <person name="Halling S.M."/>
            <person name="Boyle S.M."/>
            <person name="Fraser C.M."/>
        </authorList>
    </citation>
    <scope>NUCLEOTIDE SEQUENCE [LARGE SCALE GENOMIC DNA]</scope>
    <source>
        <strain>1330</strain>
    </source>
</reference>
<reference key="2">
    <citation type="journal article" date="2011" name="J. Bacteriol.">
        <title>Revised genome sequence of Brucella suis 1330.</title>
        <authorList>
            <person name="Tae H."/>
            <person name="Shallom S."/>
            <person name="Settlage R."/>
            <person name="Preston D."/>
            <person name="Adams L.G."/>
            <person name="Garner H.R."/>
        </authorList>
    </citation>
    <scope>NUCLEOTIDE SEQUENCE [LARGE SCALE GENOMIC DNA]</scope>
    <source>
        <strain>1330</strain>
    </source>
</reference>
<feature type="chain" id="PRO_0000182836" description="Deoxyuridine 5'-triphosphate nucleotidohydrolase">
    <location>
        <begin position="1"/>
        <end position="157"/>
    </location>
</feature>
<feature type="binding site" evidence="1">
    <location>
        <begin position="76"/>
        <end position="78"/>
    </location>
    <ligand>
        <name>substrate</name>
    </ligand>
</feature>
<feature type="binding site" evidence="1">
    <location>
        <position position="89"/>
    </location>
    <ligand>
        <name>substrate</name>
    </ligand>
</feature>
<feature type="binding site" evidence="1">
    <location>
        <begin position="93"/>
        <end position="95"/>
    </location>
    <ligand>
        <name>substrate</name>
    </ligand>
</feature>
<feature type="binding site" evidence="1">
    <location>
        <position position="103"/>
    </location>
    <ligand>
        <name>substrate</name>
    </ligand>
</feature>
<name>DUT_BRUSU</name>
<sequence length="157" mass="16660">MTAASSSAPTLGIIRLEHAKGLDLPAYETAGSAGMDLRAAVAEDRQIVLLPGRRTLVPTGLILEIPQGYEVQIRPRSGLAFKNGITCLNTPGTIDSDYRGEVKVLLINLGDDDFRIERGMRIAQAVFAPVIQPKIEERAKISETARGAGGFGSTGTA</sequence>
<dbReference type="EC" id="3.6.1.23" evidence="1"/>
<dbReference type="EMBL" id="AE014291">
    <property type="protein sequence ID" value="AAN30575.1"/>
    <property type="molecule type" value="Genomic_DNA"/>
</dbReference>
<dbReference type="EMBL" id="CP002997">
    <property type="protein sequence ID" value="AEM18992.1"/>
    <property type="molecule type" value="Genomic_DNA"/>
</dbReference>
<dbReference type="RefSeq" id="WP_002964766.1">
    <property type="nucleotide sequence ID" value="NZ_KN046804.1"/>
</dbReference>
<dbReference type="SMR" id="P64005"/>
<dbReference type="GeneID" id="97533165"/>
<dbReference type="KEGG" id="bms:BR1675"/>
<dbReference type="KEGG" id="bsi:BS1330_I1669"/>
<dbReference type="PATRIC" id="fig|204722.21.peg.2425"/>
<dbReference type="HOGENOM" id="CLU_068508_1_0_5"/>
<dbReference type="PhylomeDB" id="P64005"/>
<dbReference type="UniPathway" id="UPA00610">
    <property type="reaction ID" value="UER00666"/>
</dbReference>
<dbReference type="PRO" id="PR:P64005"/>
<dbReference type="Proteomes" id="UP000007104">
    <property type="component" value="Chromosome I"/>
</dbReference>
<dbReference type="GO" id="GO:0004170">
    <property type="term" value="F:dUTP diphosphatase activity"/>
    <property type="evidence" value="ECO:0007669"/>
    <property type="project" value="UniProtKB-UniRule"/>
</dbReference>
<dbReference type="GO" id="GO:0000287">
    <property type="term" value="F:magnesium ion binding"/>
    <property type="evidence" value="ECO:0007669"/>
    <property type="project" value="UniProtKB-UniRule"/>
</dbReference>
<dbReference type="GO" id="GO:0006226">
    <property type="term" value="P:dUMP biosynthetic process"/>
    <property type="evidence" value="ECO:0007669"/>
    <property type="project" value="UniProtKB-UniRule"/>
</dbReference>
<dbReference type="GO" id="GO:0046081">
    <property type="term" value="P:dUTP catabolic process"/>
    <property type="evidence" value="ECO:0007669"/>
    <property type="project" value="InterPro"/>
</dbReference>
<dbReference type="CDD" id="cd07557">
    <property type="entry name" value="trimeric_dUTPase"/>
    <property type="match status" value="1"/>
</dbReference>
<dbReference type="Gene3D" id="2.70.40.10">
    <property type="match status" value="1"/>
</dbReference>
<dbReference type="HAMAP" id="MF_00116">
    <property type="entry name" value="dUTPase_bact"/>
    <property type="match status" value="1"/>
</dbReference>
<dbReference type="InterPro" id="IPR008181">
    <property type="entry name" value="dUTPase"/>
</dbReference>
<dbReference type="InterPro" id="IPR029054">
    <property type="entry name" value="dUTPase-like"/>
</dbReference>
<dbReference type="InterPro" id="IPR036157">
    <property type="entry name" value="dUTPase-like_sf"/>
</dbReference>
<dbReference type="InterPro" id="IPR033704">
    <property type="entry name" value="dUTPase_trimeric"/>
</dbReference>
<dbReference type="NCBIfam" id="TIGR00576">
    <property type="entry name" value="dut"/>
    <property type="match status" value="1"/>
</dbReference>
<dbReference type="NCBIfam" id="NF001862">
    <property type="entry name" value="PRK00601.1"/>
    <property type="match status" value="1"/>
</dbReference>
<dbReference type="PANTHER" id="PTHR11241">
    <property type="entry name" value="DEOXYURIDINE 5'-TRIPHOSPHATE NUCLEOTIDOHYDROLASE"/>
    <property type="match status" value="1"/>
</dbReference>
<dbReference type="PANTHER" id="PTHR11241:SF0">
    <property type="entry name" value="DEOXYURIDINE 5'-TRIPHOSPHATE NUCLEOTIDOHYDROLASE"/>
    <property type="match status" value="1"/>
</dbReference>
<dbReference type="Pfam" id="PF00692">
    <property type="entry name" value="dUTPase"/>
    <property type="match status" value="1"/>
</dbReference>
<dbReference type="SUPFAM" id="SSF51283">
    <property type="entry name" value="dUTPase-like"/>
    <property type="match status" value="1"/>
</dbReference>
<accession>P64005</accession>
<accession>G0K6T7</accession>
<accession>Q8YIT4</accession>
<organism>
    <name type="scientific">Brucella suis biovar 1 (strain 1330)</name>
    <dbReference type="NCBI Taxonomy" id="204722"/>
    <lineage>
        <taxon>Bacteria</taxon>
        <taxon>Pseudomonadati</taxon>
        <taxon>Pseudomonadota</taxon>
        <taxon>Alphaproteobacteria</taxon>
        <taxon>Hyphomicrobiales</taxon>
        <taxon>Brucellaceae</taxon>
        <taxon>Brucella/Ochrobactrum group</taxon>
        <taxon>Brucella</taxon>
    </lineage>
</organism>
<keyword id="KW-0378">Hydrolase</keyword>
<keyword id="KW-0460">Magnesium</keyword>
<keyword id="KW-0479">Metal-binding</keyword>
<keyword id="KW-0546">Nucleotide metabolism</keyword>
<protein>
    <recommendedName>
        <fullName evidence="1">Deoxyuridine 5'-triphosphate nucleotidohydrolase</fullName>
        <shortName evidence="1">dUTPase</shortName>
        <ecNumber evidence="1">3.6.1.23</ecNumber>
    </recommendedName>
    <alternativeName>
        <fullName evidence="1">dUTP pyrophosphatase</fullName>
    </alternativeName>
</protein>
<evidence type="ECO:0000255" key="1">
    <source>
        <dbReference type="HAMAP-Rule" id="MF_00116"/>
    </source>
</evidence>